<name>VSGP_EBOSB</name>
<keyword id="KW-0165">Cleavage on pair of basic residues</keyword>
<keyword id="KW-1015">Disulfide bond</keyword>
<keyword id="KW-0325">Glycoprotein</keyword>
<keyword id="KW-0407">Ion channel</keyword>
<keyword id="KW-0406">Ion transport</keyword>
<keyword id="KW-0691">RNA editing</keyword>
<keyword id="KW-0964">Secreted</keyword>
<keyword id="KW-0732">Signal</keyword>
<keyword id="KW-0813">Transport</keyword>
<keyword id="KW-1182">Viral ion channel</keyword>
<protein>
    <recommendedName>
        <fullName>Pre-small/secreted glycoprotein</fullName>
        <shortName>pre-sGP</shortName>
    </recommendedName>
    <component>
        <recommendedName>
            <fullName>Small/secreted glycoprotein</fullName>
            <shortName>sGP</shortName>
        </recommendedName>
    </component>
    <component>
        <recommendedName>
            <fullName>Delta-peptide</fullName>
        </recommendedName>
    </component>
</protein>
<evidence type="ECO:0000250" key="1"/>
<evidence type="ECO:0000250" key="2">
    <source>
        <dbReference type="UniProtKB" id="P60170"/>
    </source>
</evidence>
<evidence type="ECO:0000255" key="3"/>
<evidence type="ECO:0000256" key="4">
    <source>
        <dbReference type="SAM" id="MobiDB-lite"/>
    </source>
</evidence>
<evidence type="ECO:0000269" key="5">
    <source>
    </source>
</evidence>
<evidence type="ECO:0000305" key="6"/>
<organism>
    <name type="scientific">Sudan ebolavirus (strain Boniface-76)</name>
    <name type="common">SEBOV</name>
    <name type="synonym">Sudan Ebola virus</name>
    <dbReference type="NCBI Taxonomy" id="128948"/>
    <lineage>
        <taxon>Viruses</taxon>
        <taxon>Riboviria</taxon>
        <taxon>Orthornavirae</taxon>
        <taxon>Negarnaviricota</taxon>
        <taxon>Haploviricotina</taxon>
        <taxon>Monjiviricetes</taxon>
        <taxon>Mononegavirales</taxon>
        <taxon>Filoviridae</taxon>
        <taxon>Orthoebolavirus</taxon>
        <taxon>Orthoebolavirus sudanense</taxon>
        <taxon>Sudan ebolavirus</taxon>
    </lineage>
</organism>
<gene>
    <name type="primary">GP</name>
</gene>
<organismHost>
    <name type="scientific">Epomops franqueti</name>
    <name type="common">Franquet's epauletted fruit bat</name>
    <name type="synonym">Epomophorus franqueti</name>
    <dbReference type="NCBI Taxonomy" id="77231"/>
</organismHost>
<organismHost>
    <name type="scientific">Homo sapiens</name>
    <name type="common">Human</name>
    <dbReference type="NCBI Taxonomy" id="9606"/>
</organismHost>
<organismHost>
    <name type="scientific">Myonycteris torquata</name>
    <name type="common">Little collared fruit bat</name>
    <dbReference type="NCBI Taxonomy" id="77243"/>
</organismHost>
<dbReference type="EMBL" id="U28134">
    <property type="protein sequence ID" value="AAB37097.1"/>
    <property type="molecule type" value="Genomic_RNA"/>
</dbReference>
<dbReference type="SMR" id="P60172"/>
<dbReference type="GlyCosmos" id="P60172">
    <property type="glycosylation" value="6 sites, No reported glycans"/>
</dbReference>
<dbReference type="GO" id="GO:0005576">
    <property type="term" value="C:extracellular region"/>
    <property type="evidence" value="ECO:0007669"/>
    <property type="project" value="UniProtKB-SubCell"/>
</dbReference>
<dbReference type="GO" id="GO:0033644">
    <property type="term" value="C:host cell membrane"/>
    <property type="evidence" value="ECO:0007669"/>
    <property type="project" value="UniProtKB-KW"/>
</dbReference>
<dbReference type="GO" id="GO:0015267">
    <property type="term" value="F:channel activity"/>
    <property type="evidence" value="ECO:0007669"/>
    <property type="project" value="UniProtKB-KW"/>
</dbReference>
<dbReference type="GO" id="GO:0034220">
    <property type="term" value="P:monoatomic ion transmembrane transport"/>
    <property type="evidence" value="ECO:0007669"/>
    <property type="project" value="UniProtKB-KW"/>
</dbReference>
<dbReference type="InterPro" id="IPR014625">
    <property type="entry name" value="GPC_FiloV"/>
</dbReference>
<dbReference type="InterPro" id="IPR002561">
    <property type="entry name" value="GPC_filovir-type_extra_dom"/>
</dbReference>
<dbReference type="Pfam" id="PF01611">
    <property type="entry name" value="Filo_glycop"/>
    <property type="match status" value="1"/>
</dbReference>
<dbReference type="PIRSF" id="PIRSF036874">
    <property type="entry name" value="GPC_FiloV"/>
    <property type="match status" value="1"/>
</dbReference>
<proteinExistence type="inferred from homology"/>
<reference key="1">
    <citation type="journal article" date="1996" name="Proc. Natl. Acad. Sci. U.S.A.">
        <title>The virion glycoproteins of Ebola viruses are encoded in two reading frames and are expressed through transcriptional editing.</title>
        <authorList>
            <person name="Sanchez A."/>
            <person name="Trappier S.G."/>
            <person name="Mahy B.W.J."/>
            <person name="Peters C.J."/>
            <person name="Nichol S.T."/>
        </authorList>
    </citation>
    <scope>NUCLEOTIDE SEQUENCE [GENOMIC RNA]</scope>
    <scope>RNA EDITING</scope>
</reference>
<accession>P60172</accession>
<accession>Q89455</accession>
<feature type="signal peptide" evidence="3">
    <location>
        <begin position="1"/>
        <end position="32"/>
    </location>
</feature>
<feature type="chain" id="PRO_0000037503" description="Pre-small/secreted glycoprotein" evidence="1">
    <location>
        <begin position="33"/>
        <end position="372"/>
    </location>
</feature>
<feature type="chain" id="PRO_0000037504" description="Small/secreted glycoprotein" evidence="1">
    <location>
        <begin position="33"/>
        <end position="324"/>
    </location>
</feature>
<feature type="chain" id="PRO_0000037505" description="Delta-peptide" evidence="1">
    <location>
        <begin position="325"/>
        <end position="372"/>
    </location>
</feature>
<feature type="region of interest" description="Disordered" evidence="4">
    <location>
        <begin position="320"/>
        <end position="340"/>
    </location>
</feature>
<feature type="site" description="Cleavage; by host furin" evidence="1">
    <location>
        <begin position="324"/>
        <end position="325"/>
    </location>
</feature>
<feature type="glycosylation site" description="N-linked (GlcNAc...) asparagine; by host" evidence="3">
    <location>
        <position position="40"/>
    </location>
</feature>
<feature type="glycosylation site" description="N-linked (GlcNAc...) asparagine; by host" evidence="3">
    <location>
        <position position="204"/>
    </location>
</feature>
<feature type="glycosylation site" description="N-linked (GlcNAc...) asparagine; by host" evidence="3">
    <location>
        <position position="208"/>
    </location>
</feature>
<feature type="glycosylation site" description="N-linked (GlcNAc...) asparagine; by host" evidence="3">
    <location>
        <position position="238"/>
    </location>
</feature>
<feature type="glycosylation site" description="N-linked (GlcNAc...) asparagine; by host" evidence="3">
    <location>
        <position position="257"/>
    </location>
</feature>
<feature type="glycosylation site" description="N-linked (GlcNAc...) asparagine; by host" evidence="3">
    <location>
        <position position="268"/>
    </location>
</feature>
<feature type="disulfide bond" description="Interchain" evidence="1">
    <location>
        <position position="53"/>
    </location>
</feature>
<feature type="disulfide bond" evidence="1">
    <location>
        <begin position="108"/>
        <end position="135"/>
    </location>
</feature>
<feature type="disulfide bond" evidence="1">
    <location>
        <begin position="121"/>
        <end position="147"/>
    </location>
</feature>
<feature type="disulfide bond" description="Interchain" evidence="1">
    <location>
        <position position="306"/>
    </location>
</feature>
<sequence>MEGLSLLQLPRDKFRKSSFFVWVIILFQKAFSMPLGVVTNSTLEVTEIDQLVCKDHLASTDQLKSVGLNLEGSGVSTDIPSATKRWGFRSGVPPQVVSYEAGEWAENCYNLEIKKPDGSECLPPPPDGVRGFPRCRYVHKAQGTGPCPGDYAFHKDGAFFLYDRLASTVIYRGVNFAEGVIAFLILAKPKETFLQSPPIREAANYTENTSSYYATSYLEYEIENFGAQHSTTLFKINNNTFVLLDRPHTPQFLFQLNDTIQLHQQLSNTTGKLIWTLDANINADIGEWAFWENKKISPNNYVEKSCLSKLYRSTRQKTMMRHRRELQREESPTGPPGSIRTWFQRIPLGWFHCTYQKGKQHCRLRIRQKVEE</sequence>
<comment type="function">
    <molecule>Small/secreted glycoprotein</molecule>
    <text evidence="2">Seems to possess an anti-inflammatory activity as it can reverse the barrier-decreasing effects of TNF alpha. Might therefore contribute to the lack of inflammatory reaction seen during infection in spite the of extensive necrosis and massive virus production. Does not seem to be involved in activation of primary macrophages. Does not seem to interact specifically with neutrophils.</text>
</comment>
<comment type="function">
    <molecule>Delta-peptide</molecule>
    <text evidence="2">Viroporin that permeabilizes mammalian cell plasma membranes. It acts by altering permeation of ionic compounds and small molecules. This activity may lead to viral enterotoxic activity.</text>
</comment>
<comment type="subunit">
    <molecule>Small/secreted glycoprotein</molecule>
    <text evidence="2">Homodimer; disulfide-linked (By similarity). The homodimers are linked by two disulfide bonds in a parallel orientation (By similarity).</text>
</comment>
<comment type="subunit">
    <molecule>Delta-peptide</molecule>
    <text>Monomer.</text>
</comment>
<comment type="subcellular location">
    <molecule>Small/secreted glycoprotein</molecule>
    <subcellularLocation>
        <location evidence="2">Secreted</location>
    </subcellularLocation>
</comment>
<comment type="subcellular location">
    <molecule>Delta-peptide</molecule>
    <subcellularLocation>
        <location evidence="2">Secreted</location>
    </subcellularLocation>
</comment>
<comment type="PTM">
    <molecule>Pre-small/secreted glycoprotein</molecule>
    <text evidence="2">This precursor is processed into mature sGP and delta-peptide by host furin or furin-like proteases. The cleavage site corresponds to the furin optimal cleavage sequence [KR]-X-[KR]-R.</text>
</comment>
<comment type="PTM">
    <molecule>Small/secreted glycoprotein</molecule>
    <text evidence="2">N-glycosylated.</text>
</comment>
<comment type="PTM">
    <molecule>Delta-peptide</molecule>
    <text evidence="2">O-glycosylated.</text>
</comment>
<comment type="RNA editing">
    <location>
        <position position="295" evidence="5"/>
    </location>
    <text>Partially edited. RNA editing at this position consists of an insertion of one adenine nucleotide. The sequence displayed here is the small secreted glycoprotein, derived from the unedited RNA. The edited RNA gives rise to the full-length transmembrane glycoprotein (AC Q66814).</text>
</comment>
<comment type="similarity">
    <text evidence="6">Belongs to the filoviruses glycoprotein family.</text>
</comment>